<organism>
    <name type="scientific">Staphylococcus aureus (strain NCTC 8325 / PS 47)</name>
    <dbReference type="NCBI Taxonomy" id="93061"/>
    <lineage>
        <taxon>Bacteria</taxon>
        <taxon>Bacillati</taxon>
        <taxon>Bacillota</taxon>
        <taxon>Bacilli</taxon>
        <taxon>Bacillales</taxon>
        <taxon>Staphylococcaceae</taxon>
        <taxon>Staphylococcus</taxon>
    </lineage>
</organism>
<gene>
    <name evidence="1" type="primary">rnhB</name>
    <name type="ordered locus">SAOUHSC_01215</name>
</gene>
<keyword id="KW-0002">3D-structure</keyword>
<keyword id="KW-0963">Cytoplasm</keyword>
<keyword id="KW-0255">Endonuclease</keyword>
<keyword id="KW-0378">Hydrolase</keyword>
<keyword id="KW-0464">Manganese</keyword>
<keyword id="KW-0479">Metal-binding</keyword>
<keyword id="KW-0540">Nuclease</keyword>
<keyword id="KW-1185">Reference proteome</keyword>
<sequence length="255" mass="28513">MTLTIKEVTQLINAVNTIEELENHECFLDERKGVQNAIARRRKALEKEQALKEKYVEMTYFENEILKEHPNAIICGIDEVGRGPLAGPVVACATILNSNHNYLGLDDSKKVPVTKRLELNEALKNEVTAFAYGIATAEEIDEFNIYKATQIAMQRAIDGLSVQPTHLLIDAMTLDNALPQVSLIKGDARSVSIAAASIMAKVFRDDYMTQLSKDYPEYGFEKNAGYGTKQHLLAIDDIGIMKEHRKSFEPIKSLL</sequence>
<proteinExistence type="evidence at protein level"/>
<evidence type="ECO:0000255" key="1">
    <source>
        <dbReference type="HAMAP-Rule" id="MF_00052"/>
    </source>
</evidence>
<evidence type="ECO:0000255" key="2">
    <source>
        <dbReference type="PROSITE-ProRule" id="PRU01319"/>
    </source>
</evidence>
<evidence type="ECO:0007829" key="3">
    <source>
        <dbReference type="PDB" id="5Y9P"/>
    </source>
</evidence>
<comment type="function">
    <text evidence="1">Endonuclease that specifically degrades the RNA of RNA-DNA hybrids.</text>
</comment>
<comment type="catalytic activity">
    <reaction evidence="1">
        <text>Endonucleolytic cleavage to 5'-phosphomonoester.</text>
        <dbReference type="EC" id="3.1.26.4"/>
    </reaction>
</comment>
<comment type="cofactor">
    <cofactor evidence="1">
        <name>Mn(2+)</name>
        <dbReference type="ChEBI" id="CHEBI:29035"/>
    </cofactor>
    <cofactor evidence="1">
        <name>Mg(2+)</name>
        <dbReference type="ChEBI" id="CHEBI:18420"/>
    </cofactor>
    <text evidence="1">Manganese or magnesium. Binds 1 divalent metal ion per monomer in the absence of substrate. May bind a second metal ion after substrate binding.</text>
</comment>
<comment type="subcellular location">
    <subcellularLocation>
        <location evidence="1">Cytoplasm</location>
    </subcellularLocation>
</comment>
<comment type="similarity">
    <text evidence="1">Belongs to the RNase HII family.</text>
</comment>
<feature type="chain" id="PRO_1000031209" description="Ribonuclease HII">
    <location>
        <begin position="1"/>
        <end position="255"/>
    </location>
</feature>
<feature type="domain" description="RNase H type-2" evidence="2">
    <location>
        <begin position="72"/>
        <end position="255"/>
    </location>
</feature>
<feature type="binding site" evidence="1">
    <location>
        <position position="78"/>
    </location>
    <ligand>
        <name>a divalent metal cation</name>
        <dbReference type="ChEBI" id="CHEBI:60240"/>
    </ligand>
</feature>
<feature type="binding site" evidence="1">
    <location>
        <position position="79"/>
    </location>
    <ligand>
        <name>a divalent metal cation</name>
        <dbReference type="ChEBI" id="CHEBI:60240"/>
    </ligand>
</feature>
<feature type="binding site" evidence="1">
    <location>
        <position position="170"/>
    </location>
    <ligand>
        <name>a divalent metal cation</name>
        <dbReference type="ChEBI" id="CHEBI:60240"/>
    </ligand>
</feature>
<feature type="helix" evidence="3">
    <location>
        <begin position="45"/>
        <end position="57"/>
    </location>
</feature>
<feature type="helix" evidence="3">
    <location>
        <begin position="60"/>
        <end position="68"/>
    </location>
</feature>
<feature type="strand" evidence="3">
    <location>
        <begin position="74"/>
        <end position="80"/>
    </location>
</feature>
<feature type="strand" evidence="3">
    <location>
        <begin position="85"/>
        <end position="87"/>
    </location>
</feature>
<feature type="strand" evidence="3">
    <location>
        <begin position="89"/>
        <end position="95"/>
    </location>
</feature>
<feature type="helix" evidence="3">
    <location>
        <begin position="113"/>
        <end position="126"/>
    </location>
</feature>
<feature type="strand" evidence="3">
    <location>
        <begin position="128"/>
        <end position="135"/>
    </location>
</feature>
<feature type="helix" evidence="3">
    <location>
        <begin position="137"/>
        <end position="143"/>
    </location>
</feature>
<feature type="helix" evidence="3">
    <location>
        <begin position="145"/>
        <end position="158"/>
    </location>
</feature>
<feature type="strand" evidence="3">
    <location>
        <begin position="165"/>
        <end position="171"/>
    </location>
</feature>
<feature type="strand" evidence="3">
    <location>
        <begin position="176"/>
        <end position="178"/>
    </location>
</feature>
<feature type="strand" evidence="3">
    <location>
        <begin position="180"/>
        <end position="183"/>
    </location>
</feature>
<feature type="helix" evidence="3">
    <location>
        <begin position="186"/>
        <end position="189"/>
    </location>
</feature>
<feature type="helix" evidence="3">
    <location>
        <begin position="191"/>
        <end position="214"/>
    </location>
</feature>
<feature type="helix" evidence="3">
    <location>
        <begin position="216"/>
        <end position="218"/>
    </location>
</feature>
<feature type="helix" evidence="3">
    <location>
        <begin position="220"/>
        <end position="223"/>
    </location>
</feature>
<feature type="helix" evidence="3">
    <location>
        <begin position="229"/>
        <end position="238"/>
    </location>
</feature>
<feature type="helix" evidence="3">
    <location>
        <begin position="251"/>
        <end position="255"/>
    </location>
</feature>
<reference key="1">
    <citation type="book" date="2006" name="Gram positive pathogens, 2nd edition">
        <title>The Staphylococcus aureus NCTC 8325 genome.</title>
        <editorList>
            <person name="Fischetti V."/>
            <person name="Novick R."/>
            <person name="Ferretti J."/>
            <person name="Portnoy D."/>
            <person name="Rood J."/>
        </editorList>
        <authorList>
            <person name="Gillaspy A.F."/>
            <person name="Worrell V."/>
            <person name="Orvis J."/>
            <person name="Roe B.A."/>
            <person name="Dyer D.W."/>
            <person name="Iandolo J.J."/>
        </authorList>
    </citation>
    <scope>NUCLEOTIDE SEQUENCE [LARGE SCALE GENOMIC DNA]</scope>
    <source>
        <strain>NCTC 8325 / PS 47</strain>
    </source>
</reference>
<accession>Q2FZ38</accession>
<name>RNH2_STAA8</name>
<dbReference type="EC" id="3.1.26.4" evidence="1"/>
<dbReference type="EMBL" id="CP000253">
    <property type="protein sequence ID" value="ABD30320.1"/>
    <property type="molecule type" value="Genomic_DNA"/>
</dbReference>
<dbReference type="RefSeq" id="WP_000176394.1">
    <property type="nucleotide sequence ID" value="NZ_LS483365.1"/>
</dbReference>
<dbReference type="RefSeq" id="YP_499752.1">
    <property type="nucleotide sequence ID" value="NC_007795.1"/>
</dbReference>
<dbReference type="PDB" id="5Y9P">
    <property type="method" value="X-ray"/>
    <property type="resolution" value="2.20 A"/>
    <property type="chains" value="A=1-255"/>
</dbReference>
<dbReference type="PDBsum" id="5Y9P"/>
<dbReference type="SMR" id="Q2FZ38"/>
<dbReference type="STRING" id="93061.SAOUHSC_01215"/>
<dbReference type="PaxDb" id="1280-SAXN108_1246"/>
<dbReference type="GeneID" id="3919481"/>
<dbReference type="KEGG" id="sao:SAOUHSC_01215"/>
<dbReference type="PATRIC" id="fig|93061.5.peg.1114"/>
<dbReference type="eggNOG" id="COG0164">
    <property type="taxonomic scope" value="Bacteria"/>
</dbReference>
<dbReference type="HOGENOM" id="CLU_036532_2_1_9"/>
<dbReference type="OrthoDB" id="9803420at2"/>
<dbReference type="PRO" id="PR:Q2FZ38"/>
<dbReference type="Proteomes" id="UP000008816">
    <property type="component" value="Chromosome"/>
</dbReference>
<dbReference type="GO" id="GO:0005737">
    <property type="term" value="C:cytoplasm"/>
    <property type="evidence" value="ECO:0007669"/>
    <property type="project" value="UniProtKB-SubCell"/>
</dbReference>
<dbReference type="GO" id="GO:0032299">
    <property type="term" value="C:ribonuclease H2 complex"/>
    <property type="evidence" value="ECO:0000318"/>
    <property type="project" value="GO_Central"/>
</dbReference>
<dbReference type="GO" id="GO:0030145">
    <property type="term" value="F:manganese ion binding"/>
    <property type="evidence" value="ECO:0007669"/>
    <property type="project" value="UniProtKB-UniRule"/>
</dbReference>
<dbReference type="GO" id="GO:0003723">
    <property type="term" value="F:RNA binding"/>
    <property type="evidence" value="ECO:0007669"/>
    <property type="project" value="InterPro"/>
</dbReference>
<dbReference type="GO" id="GO:0004523">
    <property type="term" value="F:RNA-DNA hybrid ribonuclease activity"/>
    <property type="evidence" value="ECO:0000318"/>
    <property type="project" value="GO_Central"/>
</dbReference>
<dbReference type="GO" id="GO:0043137">
    <property type="term" value="P:DNA replication, removal of RNA primer"/>
    <property type="evidence" value="ECO:0000318"/>
    <property type="project" value="GO_Central"/>
</dbReference>
<dbReference type="GO" id="GO:0006298">
    <property type="term" value="P:mismatch repair"/>
    <property type="evidence" value="ECO:0000318"/>
    <property type="project" value="GO_Central"/>
</dbReference>
<dbReference type="CDD" id="cd07182">
    <property type="entry name" value="RNase_HII_bacteria_HII_like"/>
    <property type="match status" value="1"/>
</dbReference>
<dbReference type="FunFam" id="3.30.420.10:FF:000006">
    <property type="entry name" value="Ribonuclease HII"/>
    <property type="match status" value="1"/>
</dbReference>
<dbReference type="Gene3D" id="3.30.420.10">
    <property type="entry name" value="Ribonuclease H-like superfamily/Ribonuclease H"/>
    <property type="match status" value="1"/>
</dbReference>
<dbReference type="HAMAP" id="MF_00052_B">
    <property type="entry name" value="RNase_HII_B"/>
    <property type="match status" value="1"/>
</dbReference>
<dbReference type="InterPro" id="IPR022898">
    <property type="entry name" value="RNase_HII"/>
</dbReference>
<dbReference type="InterPro" id="IPR001352">
    <property type="entry name" value="RNase_HII/HIII"/>
</dbReference>
<dbReference type="InterPro" id="IPR024567">
    <property type="entry name" value="RNase_HII/HIII_dom"/>
</dbReference>
<dbReference type="InterPro" id="IPR012337">
    <property type="entry name" value="RNaseH-like_sf"/>
</dbReference>
<dbReference type="InterPro" id="IPR036397">
    <property type="entry name" value="RNaseH_sf"/>
</dbReference>
<dbReference type="NCBIfam" id="NF000594">
    <property type="entry name" value="PRK00015.1-1"/>
    <property type="match status" value="1"/>
</dbReference>
<dbReference type="NCBIfam" id="NF000595">
    <property type="entry name" value="PRK00015.1-3"/>
    <property type="match status" value="1"/>
</dbReference>
<dbReference type="PANTHER" id="PTHR10954">
    <property type="entry name" value="RIBONUCLEASE H2 SUBUNIT A"/>
    <property type="match status" value="1"/>
</dbReference>
<dbReference type="PANTHER" id="PTHR10954:SF18">
    <property type="entry name" value="RIBONUCLEASE HII"/>
    <property type="match status" value="1"/>
</dbReference>
<dbReference type="Pfam" id="PF01351">
    <property type="entry name" value="RNase_HII"/>
    <property type="match status" value="1"/>
</dbReference>
<dbReference type="SUPFAM" id="SSF53098">
    <property type="entry name" value="Ribonuclease H-like"/>
    <property type="match status" value="1"/>
</dbReference>
<dbReference type="PROSITE" id="PS51975">
    <property type="entry name" value="RNASE_H_2"/>
    <property type="match status" value="1"/>
</dbReference>
<protein>
    <recommendedName>
        <fullName evidence="1">Ribonuclease HII</fullName>
        <shortName evidence="1">RNase HII</shortName>
        <ecNumber evidence="1">3.1.26.4</ecNumber>
    </recommendedName>
</protein>